<organism>
    <name type="scientific">Polistes dominula</name>
    <name type="common">European paper wasp</name>
    <name type="synonym">Vespa dominula</name>
    <dbReference type="NCBI Taxonomy" id="743375"/>
    <lineage>
        <taxon>Eukaryota</taxon>
        <taxon>Metazoa</taxon>
        <taxon>Ecdysozoa</taxon>
        <taxon>Arthropoda</taxon>
        <taxon>Hexapoda</taxon>
        <taxon>Insecta</taxon>
        <taxon>Pterygota</taxon>
        <taxon>Neoptera</taxon>
        <taxon>Endopterygota</taxon>
        <taxon>Hymenoptera</taxon>
        <taxon>Apocrita</taxon>
        <taxon>Aculeata</taxon>
        <taxon>Vespoidea</taxon>
        <taxon>Vespidae</taxon>
        <taxon>Polistinae</taxon>
        <taxon>Polistini</taxon>
        <taxon>Polistes</taxon>
    </lineage>
</organism>
<sequence length="316" mass="35059">ADDLTTLRNGTLDRGITPDCTFNEKDIELHVYSRDKRNGIILKKEILKNYDLFQKSQISHQIAILIHGFLSTGNNENFDAMAKALIEIDNFLVISVDWKKGACNAFASTNDVLGYSQAVGNTRHVGKYVADFTKLLVEQYKVPMSNIRLIGHSLGAHTSGFAGKEVQRLKLGKYKEIIGLDPAGPSFLTNKCPNRLCETDAEYVQAIHTSAILGVYYNVGSVDFYVNYGKSQPGCSEPSCSHTKAVKYLTECIKRECCLIGTPWKSYFSTPKPISQCKRDTCVCVGLNAQSYPAKGSFYVPVEKDAPYCHNEGIKL</sequence>
<evidence type="ECO:0000250" key="1">
    <source>
        <dbReference type="UniProtKB" id="A0A0M3KKW3"/>
    </source>
</evidence>
<evidence type="ECO:0000250" key="2">
    <source>
        <dbReference type="UniProtKB" id="A2VBC4"/>
    </source>
</evidence>
<evidence type="ECO:0000250" key="3">
    <source>
        <dbReference type="UniProtKB" id="P0DMB4"/>
    </source>
</evidence>
<evidence type="ECO:0000250" key="4">
    <source>
        <dbReference type="UniProtKB" id="P0DMB7"/>
    </source>
</evidence>
<evidence type="ECO:0000255" key="5"/>
<evidence type="ECO:0000255" key="6">
    <source>
        <dbReference type="PROSITE-ProRule" id="PRU10037"/>
    </source>
</evidence>
<evidence type="ECO:0000303" key="7">
    <source>
    </source>
</evidence>
<evidence type="ECO:0000305" key="8"/>
<evidence type="ECO:0000305" key="9">
    <source>
    </source>
</evidence>
<accession>Q6Q251</accession>
<feature type="signal peptide" evidence="5">
    <location>
        <begin position="1" status="less than"/>
        <end position="4"/>
    </location>
</feature>
<feature type="propeptide" id="PRO_0000425187">
    <location>
        <begin position="5"/>
        <end position="14"/>
    </location>
</feature>
<feature type="chain" id="PRO_5000093092" description="Phospholipase A1 2">
    <location>
        <begin position="15"/>
        <end position="316"/>
    </location>
</feature>
<feature type="active site" description="Nucleophile" evidence="1">
    <location>
        <position position="153"/>
    </location>
</feature>
<feature type="active site" description="Charge relay system" evidence="6">
    <location>
        <position position="181"/>
    </location>
</feature>
<feature type="active site" description="Charge relay system" evidence="6">
    <location>
        <position position="242"/>
    </location>
</feature>
<feature type="disulfide bond" evidence="1">
    <location>
        <begin position="20"/>
        <end position="103"/>
    </location>
</feature>
<feature type="disulfide bond" evidence="1">
    <location>
        <begin position="192"/>
        <end position="197"/>
    </location>
</feature>
<feature type="disulfide bond" evidence="1">
    <location>
        <begin position="235"/>
        <end position="240"/>
    </location>
</feature>
<feature type="disulfide bond" evidence="1">
    <location>
        <begin position="257"/>
        <end position="284"/>
    </location>
</feature>
<feature type="disulfide bond" evidence="1">
    <location>
        <begin position="258"/>
        <end position="309"/>
    </location>
</feature>
<feature type="disulfide bond" evidence="1">
    <location>
        <begin position="277"/>
        <end position="282"/>
    </location>
</feature>
<feature type="non-terminal residue">
    <location>
        <position position="1"/>
    </location>
</feature>
<proteinExistence type="evidence at transcript level"/>
<reference key="1">
    <citation type="journal article" date="2005" name="Acta Biol. Hung.">
        <title>Isolation, cloning and characterization of Polistes dominulus venom phospholipase A1 and its isoforms.</title>
        <authorList>
            <person name="Moawad T.I."/>
            <person name="Hoffman D.R."/>
            <person name="Zalat S."/>
        </authorList>
    </citation>
    <scope>NUCLEOTIDE SEQUENCE [MRNA]</scope>
    <source>
        <tissue>Venom gland</tissue>
    </source>
</reference>
<name>PA12_POLDO</name>
<protein>
    <recommendedName>
        <fullName evidence="7">Phospholipase A1 2</fullName>
        <shortName evidence="8">PLA1 2</shortName>
        <ecNumber evidence="3">3.1.1.32</ecNumber>
    </recommendedName>
    <allergenName evidence="7">Pol d 1</allergenName>
</protein>
<comment type="function">
    <text evidence="3 4">Catalyzes the hydrolysis of phosphatidylcholine with phospholipase A1 activity (By similarity). May act as an allergen and induce hemolytic activity (By similarity).</text>
</comment>
<comment type="catalytic activity">
    <reaction evidence="3">
        <text>a 1,2-diacyl-sn-glycero-3-phosphocholine + H2O = a 2-acyl-sn-glycero-3-phosphocholine + a fatty acid + H(+)</text>
        <dbReference type="Rhea" id="RHEA:18689"/>
        <dbReference type="ChEBI" id="CHEBI:15377"/>
        <dbReference type="ChEBI" id="CHEBI:15378"/>
        <dbReference type="ChEBI" id="CHEBI:28868"/>
        <dbReference type="ChEBI" id="CHEBI:57643"/>
        <dbReference type="ChEBI" id="CHEBI:57875"/>
        <dbReference type="EC" id="3.1.1.32"/>
    </reaction>
</comment>
<comment type="subcellular location">
    <subcellularLocation>
        <location evidence="9">Secreted</location>
    </subcellularLocation>
</comment>
<comment type="tissue specificity">
    <text evidence="9">Expressed by the venom gland.</text>
</comment>
<comment type="allergen">
    <text evidence="2">Causes an allergic reaction in human. Binds to IgE.</text>
</comment>
<comment type="similarity">
    <text evidence="8">Belongs to the AB hydrolase superfamily. Lipase family.</text>
</comment>
<keyword id="KW-0020">Allergen</keyword>
<keyword id="KW-0204">Cytolysis</keyword>
<keyword id="KW-1015">Disulfide bond</keyword>
<keyword id="KW-0354">Hemolysis</keyword>
<keyword id="KW-0378">Hydrolase</keyword>
<keyword id="KW-0442">Lipid degradation</keyword>
<keyword id="KW-0443">Lipid metabolism</keyword>
<keyword id="KW-0964">Secreted</keyword>
<keyword id="KW-0732">Signal</keyword>
<dbReference type="EC" id="3.1.1.32" evidence="3"/>
<dbReference type="EMBL" id="AY566646">
    <property type="protein sequence ID" value="AAS67042.1"/>
    <property type="molecule type" value="mRNA"/>
</dbReference>
<dbReference type="SMR" id="Q6Q251"/>
<dbReference type="Allergome" id="3434">
    <property type="allergen name" value="Pol d 1.0102"/>
</dbReference>
<dbReference type="Allergome" id="586">
    <property type="allergen name" value="Pol d 1"/>
</dbReference>
<dbReference type="ESTHER" id="poldo-q6q252">
    <property type="family name" value="Insect_Phospholipase"/>
</dbReference>
<dbReference type="OrthoDB" id="8183961at2759"/>
<dbReference type="Proteomes" id="UP000694924">
    <property type="component" value="Unplaced"/>
</dbReference>
<dbReference type="GO" id="GO:0005615">
    <property type="term" value="C:extracellular space"/>
    <property type="evidence" value="ECO:0007669"/>
    <property type="project" value="TreeGrafter"/>
</dbReference>
<dbReference type="GO" id="GO:0008970">
    <property type="term" value="F:phospholipase A1 activity"/>
    <property type="evidence" value="ECO:0007669"/>
    <property type="project" value="UniProtKB-EC"/>
</dbReference>
<dbReference type="GO" id="GO:0031640">
    <property type="term" value="P:killing of cells of another organism"/>
    <property type="evidence" value="ECO:0007669"/>
    <property type="project" value="UniProtKB-KW"/>
</dbReference>
<dbReference type="GO" id="GO:0016042">
    <property type="term" value="P:lipid catabolic process"/>
    <property type="evidence" value="ECO:0007669"/>
    <property type="project" value="UniProtKB-KW"/>
</dbReference>
<dbReference type="CDD" id="cd00707">
    <property type="entry name" value="Pancreat_lipase_like"/>
    <property type="match status" value="1"/>
</dbReference>
<dbReference type="Gene3D" id="3.40.50.1820">
    <property type="entry name" value="alpha/beta hydrolase"/>
    <property type="match status" value="1"/>
</dbReference>
<dbReference type="InterPro" id="IPR029058">
    <property type="entry name" value="AB_hydrolase_fold"/>
</dbReference>
<dbReference type="InterPro" id="IPR002334">
    <property type="entry name" value="Allerg_PlipaseA1"/>
</dbReference>
<dbReference type="InterPro" id="IPR013818">
    <property type="entry name" value="Lipase"/>
</dbReference>
<dbReference type="InterPro" id="IPR033906">
    <property type="entry name" value="Lipase_N"/>
</dbReference>
<dbReference type="InterPro" id="IPR000734">
    <property type="entry name" value="TAG_lipase"/>
</dbReference>
<dbReference type="PANTHER" id="PTHR11610">
    <property type="entry name" value="LIPASE"/>
    <property type="match status" value="1"/>
</dbReference>
<dbReference type="PANTHER" id="PTHR11610:SF173">
    <property type="entry name" value="LIPASE DOMAIN-CONTAINING PROTEIN-RELATED"/>
    <property type="match status" value="1"/>
</dbReference>
<dbReference type="Pfam" id="PF00151">
    <property type="entry name" value="Lipase"/>
    <property type="match status" value="1"/>
</dbReference>
<dbReference type="PRINTS" id="PR00825">
    <property type="entry name" value="DOLALLERGEN"/>
</dbReference>
<dbReference type="SUPFAM" id="SSF53474">
    <property type="entry name" value="alpha/beta-Hydrolases"/>
    <property type="match status" value="1"/>
</dbReference>
<dbReference type="PROSITE" id="PS00120">
    <property type="entry name" value="LIPASE_SER"/>
    <property type="match status" value="1"/>
</dbReference>